<accession>Q3Z663</accession>
<reference key="1">
    <citation type="journal article" date="2005" name="Science">
        <title>Genome sequence of the PCE-dechlorinating bacterium Dehalococcoides ethenogenes.</title>
        <authorList>
            <person name="Seshadri R."/>
            <person name="Adrian L."/>
            <person name="Fouts D.E."/>
            <person name="Eisen J.A."/>
            <person name="Phillippy A.M."/>
            <person name="Methe B.A."/>
            <person name="Ward N.L."/>
            <person name="Nelson W.C."/>
            <person name="DeBoy R.T."/>
            <person name="Khouri H.M."/>
            <person name="Kolonay J.F."/>
            <person name="Dodson R.J."/>
            <person name="Daugherty S.C."/>
            <person name="Brinkac L.M."/>
            <person name="Sullivan S.A."/>
            <person name="Madupu R."/>
            <person name="Nelson K.E."/>
            <person name="Kang K.H."/>
            <person name="Impraim M."/>
            <person name="Tran K."/>
            <person name="Robinson J.M."/>
            <person name="Forberger H.A."/>
            <person name="Fraser C.M."/>
            <person name="Zinder S.H."/>
            <person name="Heidelberg J.F."/>
        </authorList>
    </citation>
    <scope>NUCLEOTIDE SEQUENCE [LARGE SCALE GENOMIC DNA]</scope>
    <source>
        <strain>ATCC BAA-2266 / KCTC 15142 / 195</strain>
    </source>
</reference>
<proteinExistence type="inferred from homology"/>
<comment type="function">
    <text evidence="1">Catalyzes the condensation of iminoaspartate with dihydroxyacetone phosphate to form quinolinate.</text>
</comment>
<comment type="catalytic activity">
    <reaction evidence="1">
        <text>iminosuccinate + dihydroxyacetone phosphate = quinolinate + phosphate + 2 H2O + H(+)</text>
        <dbReference type="Rhea" id="RHEA:25888"/>
        <dbReference type="ChEBI" id="CHEBI:15377"/>
        <dbReference type="ChEBI" id="CHEBI:15378"/>
        <dbReference type="ChEBI" id="CHEBI:29959"/>
        <dbReference type="ChEBI" id="CHEBI:43474"/>
        <dbReference type="ChEBI" id="CHEBI:57642"/>
        <dbReference type="ChEBI" id="CHEBI:77875"/>
        <dbReference type="EC" id="2.5.1.72"/>
    </reaction>
    <physiologicalReaction direction="left-to-right" evidence="1">
        <dbReference type="Rhea" id="RHEA:25889"/>
    </physiologicalReaction>
</comment>
<comment type="cofactor">
    <cofactor evidence="1">
        <name>[4Fe-4S] cluster</name>
        <dbReference type="ChEBI" id="CHEBI:49883"/>
    </cofactor>
    <text evidence="1">Binds 1 [4Fe-4S] cluster per subunit.</text>
</comment>
<comment type="pathway">
    <text evidence="1">Cofactor biosynthesis; NAD(+) biosynthesis; quinolinate from iminoaspartate: step 1/1.</text>
</comment>
<comment type="subcellular location">
    <subcellularLocation>
        <location evidence="1">Cytoplasm</location>
    </subcellularLocation>
</comment>
<comment type="similarity">
    <text evidence="1">Belongs to the quinolinate synthase family. Type 2 subfamily.</text>
</comment>
<organism>
    <name type="scientific">Dehalococcoides mccartyi (strain ATCC BAA-2266 / KCTC 15142 / 195)</name>
    <name type="common">Dehalococcoides ethenogenes (strain 195)</name>
    <dbReference type="NCBI Taxonomy" id="243164"/>
    <lineage>
        <taxon>Bacteria</taxon>
        <taxon>Bacillati</taxon>
        <taxon>Chloroflexota</taxon>
        <taxon>Dehalococcoidia</taxon>
        <taxon>Dehalococcoidales</taxon>
        <taxon>Dehalococcoidaceae</taxon>
        <taxon>Dehalococcoides</taxon>
    </lineage>
</organism>
<feature type="chain" id="PRO_1000072572" description="Quinolinate synthase">
    <location>
        <begin position="1"/>
        <end position="302"/>
    </location>
</feature>
<feature type="binding site" evidence="1">
    <location>
        <position position="24"/>
    </location>
    <ligand>
        <name>iminosuccinate</name>
        <dbReference type="ChEBI" id="CHEBI:77875"/>
    </ligand>
</feature>
<feature type="binding site" evidence="1">
    <location>
        <position position="41"/>
    </location>
    <ligand>
        <name>iminosuccinate</name>
        <dbReference type="ChEBI" id="CHEBI:77875"/>
    </ligand>
</feature>
<feature type="binding site" evidence="1">
    <location>
        <position position="86"/>
    </location>
    <ligand>
        <name>[4Fe-4S] cluster</name>
        <dbReference type="ChEBI" id="CHEBI:49883"/>
    </ligand>
</feature>
<feature type="binding site" evidence="1">
    <location>
        <begin position="112"/>
        <end position="114"/>
    </location>
    <ligand>
        <name>iminosuccinate</name>
        <dbReference type="ChEBI" id="CHEBI:77875"/>
    </ligand>
</feature>
<feature type="binding site" evidence="1">
    <location>
        <position position="129"/>
    </location>
    <ligand>
        <name>iminosuccinate</name>
        <dbReference type="ChEBI" id="CHEBI:77875"/>
    </ligand>
</feature>
<feature type="binding site" evidence="1">
    <location>
        <position position="171"/>
    </location>
    <ligand>
        <name>[4Fe-4S] cluster</name>
        <dbReference type="ChEBI" id="CHEBI:49883"/>
    </ligand>
</feature>
<feature type="binding site" evidence="1">
    <location>
        <begin position="197"/>
        <end position="199"/>
    </location>
    <ligand>
        <name>iminosuccinate</name>
        <dbReference type="ChEBI" id="CHEBI:77875"/>
    </ligand>
</feature>
<feature type="binding site" evidence="1">
    <location>
        <position position="214"/>
    </location>
    <ligand>
        <name>iminosuccinate</name>
        <dbReference type="ChEBI" id="CHEBI:77875"/>
    </ligand>
</feature>
<feature type="binding site" evidence="1">
    <location>
        <position position="259"/>
    </location>
    <ligand>
        <name>[4Fe-4S] cluster</name>
        <dbReference type="ChEBI" id="CHEBI:49883"/>
    </ligand>
</feature>
<sequence>MYTELISHKIAELKKERKAVILAHNYQLGEIQEAADFVGDSLELARKAANIDAEVIVFCGVHFMAETAAILSPEKTVLAPEPKAGCPMADMISGAELREFKARYPGLPVVCYVNSTAEVKAESDICCTSANAVKVVESLKSDTVLFVPDQYLGAFVQAHTAKKIISWPGYCPCHARIKPEDILNLKKHYPKAKVVVHPESRPEVTALADGVLSTGQMVTYAARADVKELIVGTEIGMLYRLRKENPNKLFIPVSEQAVCANMKMTTLPKLLASLENMQTVVSVPEEIRRKAVGAVERMLKVT</sequence>
<keyword id="KW-0004">4Fe-4S</keyword>
<keyword id="KW-0963">Cytoplasm</keyword>
<keyword id="KW-0408">Iron</keyword>
<keyword id="KW-0411">Iron-sulfur</keyword>
<keyword id="KW-0479">Metal-binding</keyword>
<keyword id="KW-0662">Pyridine nucleotide biosynthesis</keyword>
<keyword id="KW-0808">Transferase</keyword>
<evidence type="ECO:0000255" key="1">
    <source>
        <dbReference type="HAMAP-Rule" id="MF_00568"/>
    </source>
</evidence>
<gene>
    <name evidence="1" type="primary">nadA</name>
    <name type="ordered locus">DET1590</name>
</gene>
<protein>
    <recommendedName>
        <fullName evidence="1">Quinolinate synthase</fullName>
        <ecNumber evidence="1">2.5.1.72</ecNumber>
    </recommendedName>
</protein>
<dbReference type="EC" id="2.5.1.72" evidence="1"/>
<dbReference type="EMBL" id="CP000027">
    <property type="protein sequence ID" value="AAW39153.1"/>
    <property type="molecule type" value="Genomic_DNA"/>
</dbReference>
<dbReference type="RefSeq" id="WP_010937262.1">
    <property type="nucleotide sequence ID" value="NC_002936.3"/>
</dbReference>
<dbReference type="SMR" id="Q3Z663"/>
<dbReference type="FunCoup" id="Q3Z663">
    <property type="interactions" value="221"/>
</dbReference>
<dbReference type="STRING" id="243164.DET1590"/>
<dbReference type="GeneID" id="3229111"/>
<dbReference type="KEGG" id="det:DET1590"/>
<dbReference type="PATRIC" id="fig|243164.10.peg.1500"/>
<dbReference type="eggNOG" id="COG0379">
    <property type="taxonomic scope" value="Bacteria"/>
</dbReference>
<dbReference type="HOGENOM" id="CLU_047382_0_0_0"/>
<dbReference type="InParanoid" id="Q3Z663"/>
<dbReference type="UniPathway" id="UPA00253">
    <property type="reaction ID" value="UER00327"/>
</dbReference>
<dbReference type="Proteomes" id="UP000008289">
    <property type="component" value="Chromosome"/>
</dbReference>
<dbReference type="GO" id="GO:0005737">
    <property type="term" value="C:cytoplasm"/>
    <property type="evidence" value="ECO:0007669"/>
    <property type="project" value="UniProtKB-SubCell"/>
</dbReference>
<dbReference type="GO" id="GO:0051539">
    <property type="term" value="F:4 iron, 4 sulfur cluster binding"/>
    <property type="evidence" value="ECO:0007669"/>
    <property type="project" value="UniProtKB-KW"/>
</dbReference>
<dbReference type="GO" id="GO:0046872">
    <property type="term" value="F:metal ion binding"/>
    <property type="evidence" value="ECO:0007669"/>
    <property type="project" value="UniProtKB-KW"/>
</dbReference>
<dbReference type="GO" id="GO:0008987">
    <property type="term" value="F:quinolinate synthetase A activity"/>
    <property type="evidence" value="ECO:0007669"/>
    <property type="project" value="UniProtKB-UniRule"/>
</dbReference>
<dbReference type="GO" id="GO:0034628">
    <property type="term" value="P:'de novo' NAD biosynthetic process from L-aspartate"/>
    <property type="evidence" value="ECO:0007669"/>
    <property type="project" value="TreeGrafter"/>
</dbReference>
<dbReference type="FunFam" id="3.40.50.10800:FF:000003">
    <property type="entry name" value="Quinolinate synthase A"/>
    <property type="match status" value="1"/>
</dbReference>
<dbReference type="Gene3D" id="3.40.50.10800">
    <property type="entry name" value="NadA-like"/>
    <property type="match status" value="3"/>
</dbReference>
<dbReference type="HAMAP" id="MF_00568">
    <property type="entry name" value="NadA_type2"/>
    <property type="match status" value="1"/>
</dbReference>
<dbReference type="InterPro" id="IPR003473">
    <property type="entry name" value="NadA"/>
</dbReference>
<dbReference type="InterPro" id="IPR036094">
    <property type="entry name" value="NadA_sf"/>
</dbReference>
<dbReference type="InterPro" id="IPR023066">
    <property type="entry name" value="Quinolinate_synth_type2"/>
</dbReference>
<dbReference type="NCBIfam" id="TIGR00550">
    <property type="entry name" value="nadA"/>
    <property type="match status" value="1"/>
</dbReference>
<dbReference type="NCBIfam" id="NF006878">
    <property type="entry name" value="PRK09375.1-2"/>
    <property type="match status" value="1"/>
</dbReference>
<dbReference type="NCBIfam" id="NF006879">
    <property type="entry name" value="PRK09375.1-4"/>
    <property type="match status" value="1"/>
</dbReference>
<dbReference type="PANTHER" id="PTHR30573:SF0">
    <property type="entry name" value="QUINOLINATE SYNTHASE, CHLOROPLASTIC"/>
    <property type="match status" value="1"/>
</dbReference>
<dbReference type="PANTHER" id="PTHR30573">
    <property type="entry name" value="QUINOLINATE SYNTHETASE A"/>
    <property type="match status" value="1"/>
</dbReference>
<dbReference type="Pfam" id="PF02445">
    <property type="entry name" value="NadA"/>
    <property type="match status" value="1"/>
</dbReference>
<dbReference type="SUPFAM" id="SSF142754">
    <property type="entry name" value="NadA-like"/>
    <property type="match status" value="1"/>
</dbReference>
<name>NADA_DEHM1</name>